<name>GMK1_ORYSJ</name>
<gene>
    <name type="primary">GK1</name>
    <name type="ordered locus">Os12g0515600</name>
    <name type="ordered locus">LOC_Os12g33100</name>
</gene>
<dbReference type="EC" id="2.7.4.8"/>
<dbReference type="EMBL" id="AB267729">
    <property type="protein sequence ID" value="BAF46275.1"/>
    <property type="molecule type" value="mRNA"/>
</dbReference>
<dbReference type="EMBL" id="DP000011">
    <property type="protein sequence ID" value="ABA98706.2"/>
    <property type="molecule type" value="Genomic_DNA"/>
</dbReference>
<dbReference type="EMBL" id="AP008218">
    <property type="protein sequence ID" value="BAF29906.1"/>
    <property type="molecule type" value="Genomic_DNA"/>
</dbReference>
<dbReference type="EMBL" id="AP014968">
    <property type="protein sequence ID" value="BAT17372.1"/>
    <property type="molecule type" value="Genomic_DNA"/>
</dbReference>
<dbReference type="RefSeq" id="XP_015620685.1">
    <property type="nucleotide sequence ID" value="XM_015765199.1"/>
</dbReference>
<dbReference type="SMR" id="Q2QPW1"/>
<dbReference type="FunCoup" id="Q2QPW1">
    <property type="interactions" value="72"/>
</dbReference>
<dbReference type="STRING" id="39947.Q2QPW1"/>
<dbReference type="PaxDb" id="39947-Q2QPW1"/>
<dbReference type="EnsemblPlants" id="Os12t0515600-01">
    <property type="protein sequence ID" value="Os12t0515600-01"/>
    <property type="gene ID" value="Os12g0515600"/>
</dbReference>
<dbReference type="Gramene" id="Os12t0515600-01">
    <property type="protein sequence ID" value="Os12t0515600-01"/>
    <property type="gene ID" value="Os12g0515600"/>
</dbReference>
<dbReference type="KEGG" id="dosa:Os12g0515600"/>
<dbReference type="eggNOG" id="KOG0707">
    <property type="taxonomic scope" value="Eukaryota"/>
</dbReference>
<dbReference type="HOGENOM" id="CLU_037258_0_0_1"/>
<dbReference type="InParanoid" id="Q2QPW1"/>
<dbReference type="OMA" id="PRCMEEN"/>
<dbReference type="OrthoDB" id="6334211at2759"/>
<dbReference type="BRENDA" id="2.7.4.8">
    <property type="organism ID" value="8948"/>
</dbReference>
<dbReference type="Proteomes" id="UP000000763">
    <property type="component" value="Chromosome 12"/>
</dbReference>
<dbReference type="Proteomes" id="UP000059680">
    <property type="component" value="Chromosome 12"/>
</dbReference>
<dbReference type="GO" id="GO:0005829">
    <property type="term" value="C:cytosol"/>
    <property type="evidence" value="ECO:0000318"/>
    <property type="project" value="GO_Central"/>
</dbReference>
<dbReference type="GO" id="GO:0005634">
    <property type="term" value="C:nucleus"/>
    <property type="evidence" value="ECO:0007669"/>
    <property type="project" value="UniProtKB-SubCell"/>
</dbReference>
<dbReference type="GO" id="GO:0005524">
    <property type="term" value="F:ATP binding"/>
    <property type="evidence" value="ECO:0007669"/>
    <property type="project" value="UniProtKB-KW"/>
</dbReference>
<dbReference type="GO" id="GO:0004385">
    <property type="term" value="F:guanylate kinase activity"/>
    <property type="evidence" value="ECO:0000318"/>
    <property type="project" value="GO_Central"/>
</dbReference>
<dbReference type="CDD" id="cd00071">
    <property type="entry name" value="GMPK"/>
    <property type="match status" value="1"/>
</dbReference>
<dbReference type="FunFam" id="3.30.63.10:FF:000002">
    <property type="entry name" value="Guanylate kinase 1"/>
    <property type="match status" value="1"/>
</dbReference>
<dbReference type="FunFam" id="3.40.50.300:FF:000776">
    <property type="entry name" value="Guanylate kinase 2"/>
    <property type="match status" value="1"/>
</dbReference>
<dbReference type="Gene3D" id="3.30.63.10">
    <property type="entry name" value="Guanylate Kinase phosphate binding domain"/>
    <property type="match status" value="1"/>
</dbReference>
<dbReference type="Gene3D" id="3.40.50.300">
    <property type="entry name" value="P-loop containing nucleotide triphosphate hydrolases"/>
    <property type="match status" value="1"/>
</dbReference>
<dbReference type="HAMAP" id="MF_00328">
    <property type="entry name" value="Guanylate_kinase"/>
    <property type="match status" value="1"/>
</dbReference>
<dbReference type="InterPro" id="IPR011043">
    <property type="entry name" value="Gal_Oxase/kelch_b-propeller"/>
</dbReference>
<dbReference type="InterPro" id="IPR008145">
    <property type="entry name" value="GK/Ca_channel_bsu"/>
</dbReference>
<dbReference type="InterPro" id="IPR008144">
    <property type="entry name" value="Guanylate_kin-like_dom"/>
</dbReference>
<dbReference type="InterPro" id="IPR017665">
    <property type="entry name" value="Guanylate_kinase"/>
</dbReference>
<dbReference type="InterPro" id="IPR020590">
    <property type="entry name" value="Guanylate_kinase_CS"/>
</dbReference>
<dbReference type="InterPro" id="IPR027417">
    <property type="entry name" value="P-loop_NTPase"/>
</dbReference>
<dbReference type="NCBIfam" id="TIGR03263">
    <property type="entry name" value="guanyl_kin"/>
    <property type="match status" value="1"/>
</dbReference>
<dbReference type="PANTHER" id="PTHR23117:SF13">
    <property type="entry name" value="GUANYLATE KINASE"/>
    <property type="match status" value="1"/>
</dbReference>
<dbReference type="PANTHER" id="PTHR23117">
    <property type="entry name" value="GUANYLATE KINASE-RELATED"/>
    <property type="match status" value="1"/>
</dbReference>
<dbReference type="Pfam" id="PF00625">
    <property type="entry name" value="Guanylate_kin"/>
    <property type="match status" value="1"/>
</dbReference>
<dbReference type="SMART" id="SM00072">
    <property type="entry name" value="GuKc"/>
    <property type="match status" value="1"/>
</dbReference>
<dbReference type="SUPFAM" id="SSF50965">
    <property type="entry name" value="Galactose oxidase, central domain"/>
    <property type="match status" value="1"/>
</dbReference>
<dbReference type="SUPFAM" id="SSF52540">
    <property type="entry name" value="P-loop containing nucleoside triphosphate hydrolases"/>
    <property type="match status" value="1"/>
</dbReference>
<dbReference type="PROSITE" id="PS00856">
    <property type="entry name" value="GUANYLATE_KINASE_1"/>
    <property type="match status" value="1"/>
</dbReference>
<dbReference type="PROSITE" id="PS50052">
    <property type="entry name" value="GUANYLATE_KINASE_2"/>
    <property type="match status" value="1"/>
</dbReference>
<keyword id="KW-0067">ATP-binding</keyword>
<keyword id="KW-0963">Cytoplasm</keyword>
<keyword id="KW-0418">Kinase</keyword>
<keyword id="KW-0547">Nucleotide-binding</keyword>
<keyword id="KW-0539">Nucleus</keyword>
<keyword id="KW-1185">Reference proteome</keyword>
<keyword id="KW-0808">Transferase</keyword>
<sequence>MGEEAPEFRVESVALESKDCLQNAIDIGDKTYVISRSDDPKSSITIKILDKLTQTWVVPTVLGAPPNPTSSHSAVLVNNEKILIIEKGVPLNDSIWFLEVDTPFVKQQSKIKGTVVVAWSKGVIGEGQKPIVISGPSGVGKGTLIAKLMKEYPSKFGFSVSHTTRAPREKEIDGVHYHFTERSKIEEEISEGKFLEFAHVHGNVYGTSVEAVESVTDEGKRCILDIDVQGARSVRASSLEAIFIFVCPPSFEELEKRLRARGTETEEQIQKRLRNARAELDQSNSPGLFDHLLVNDDLEACYENLKKLLSLDDDHEDSNDSFIKDGKETACYSILSKTNSEILLQSETNEAEKGTTNLLSLDLSLSGGAPGRTRGLKISPVN</sequence>
<accession>Q2QPW1</accession>
<accession>A0A0P0YAW3</accession>
<evidence type="ECO:0000250" key="1"/>
<evidence type="ECO:0000269" key="2">
    <source>
    </source>
</evidence>
<evidence type="ECO:0000305" key="3"/>
<evidence type="ECO:0000305" key="4">
    <source>
    </source>
</evidence>
<protein>
    <recommendedName>
        <fullName>Guanylate kinase 1</fullName>
        <shortName>OsGK1</shortName>
        <ecNumber>2.7.4.8</ecNumber>
    </recommendedName>
    <alternativeName>
        <fullName>GMP kinase 1</fullName>
    </alternativeName>
</protein>
<comment type="function">
    <text evidence="2">Essential for recycling GMP and indirectly, cGMP.</text>
</comment>
<comment type="catalytic activity">
    <reaction>
        <text>GMP + ATP = GDP + ADP</text>
        <dbReference type="Rhea" id="RHEA:20780"/>
        <dbReference type="ChEBI" id="CHEBI:30616"/>
        <dbReference type="ChEBI" id="CHEBI:58115"/>
        <dbReference type="ChEBI" id="CHEBI:58189"/>
        <dbReference type="ChEBI" id="CHEBI:456216"/>
        <dbReference type="EC" id="2.7.4.8"/>
    </reaction>
</comment>
<comment type="subunit">
    <text evidence="1">Monomer.</text>
</comment>
<comment type="subcellular location">
    <subcellularLocation>
        <location evidence="2">Cytoplasm</location>
    </subcellularLocation>
    <subcellularLocation>
        <location evidence="2">Nucleus</location>
    </subcellularLocation>
    <text>Predominantly cytoplasmic.</text>
</comment>
<comment type="miscellaneous">
    <text evidence="4">Plants silencing GK1 have no visible phenotype.</text>
</comment>
<comment type="similarity">
    <text evidence="3">Belongs to the guanylate kinase family.</text>
</comment>
<reference key="1">
    <citation type="journal article" date="2007" name="Plant J.">
        <title>The rice nuclear gene, VIRESCENT 2, is essential for chloroplast development and encodes a novel type of guanylate kinase targeted to plastids and mitochondria.</title>
        <authorList>
            <person name="Sugimoto H."/>
            <person name="Kusumi K."/>
            <person name="Noguchi K."/>
            <person name="Yano M."/>
            <person name="Yoshimura A."/>
            <person name="Iba K."/>
        </authorList>
    </citation>
    <scope>NUCLEOTIDE SEQUENCE [MRNA]</scope>
    <scope>FUNCTION</scope>
    <scope>SUBCELLULAR LOCATION</scope>
    <source>
        <strain>cv. Taichung 65</strain>
    </source>
</reference>
<reference key="2">
    <citation type="journal article" date="2005" name="BMC Biol.">
        <title>The sequence of rice chromosomes 11 and 12, rich in disease resistance genes and recent gene duplications.</title>
        <authorList>
            <consortium name="The rice chromosomes 11 and 12 sequencing consortia"/>
        </authorList>
    </citation>
    <scope>NUCLEOTIDE SEQUENCE [LARGE SCALE GENOMIC DNA]</scope>
    <source>
        <strain>cv. Nipponbare</strain>
    </source>
</reference>
<reference key="3">
    <citation type="journal article" date="2005" name="Nature">
        <title>The map-based sequence of the rice genome.</title>
        <authorList>
            <consortium name="International rice genome sequencing project (IRGSP)"/>
        </authorList>
    </citation>
    <scope>NUCLEOTIDE SEQUENCE [LARGE SCALE GENOMIC DNA]</scope>
    <source>
        <strain>cv. Nipponbare</strain>
    </source>
</reference>
<reference key="4">
    <citation type="journal article" date="2008" name="Nucleic Acids Res.">
        <title>The rice annotation project database (RAP-DB): 2008 update.</title>
        <authorList>
            <consortium name="The rice annotation project (RAP)"/>
        </authorList>
    </citation>
    <scope>GENOME REANNOTATION</scope>
    <source>
        <strain>cv. Nipponbare</strain>
    </source>
</reference>
<reference key="5">
    <citation type="journal article" date="2013" name="Rice">
        <title>Improvement of the Oryza sativa Nipponbare reference genome using next generation sequence and optical map data.</title>
        <authorList>
            <person name="Kawahara Y."/>
            <person name="de la Bastide M."/>
            <person name="Hamilton J.P."/>
            <person name="Kanamori H."/>
            <person name="McCombie W.R."/>
            <person name="Ouyang S."/>
            <person name="Schwartz D.C."/>
            <person name="Tanaka T."/>
            <person name="Wu J."/>
            <person name="Zhou S."/>
            <person name="Childs K.L."/>
            <person name="Davidson R.M."/>
            <person name="Lin H."/>
            <person name="Quesada-Ocampo L."/>
            <person name="Vaillancourt B."/>
            <person name="Sakai H."/>
            <person name="Lee S.S."/>
            <person name="Kim J."/>
            <person name="Numa H."/>
            <person name="Itoh T."/>
            <person name="Buell C.R."/>
            <person name="Matsumoto T."/>
        </authorList>
    </citation>
    <scope>GENOME REANNOTATION</scope>
    <source>
        <strain>cv. Nipponbare</strain>
    </source>
</reference>
<organism>
    <name type="scientific">Oryza sativa subsp. japonica</name>
    <name type="common">Rice</name>
    <dbReference type="NCBI Taxonomy" id="39947"/>
    <lineage>
        <taxon>Eukaryota</taxon>
        <taxon>Viridiplantae</taxon>
        <taxon>Streptophyta</taxon>
        <taxon>Embryophyta</taxon>
        <taxon>Tracheophyta</taxon>
        <taxon>Spermatophyta</taxon>
        <taxon>Magnoliopsida</taxon>
        <taxon>Liliopsida</taxon>
        <taxon>Poales</taxon>
        <taxon>Poaceae</taxon>
        <taxon>BOP clade</taxon>
        <taxon>Oryzoideae</taxon>
        <taxon>Oryzeae</taxon>
        <taxon>Oryzinae</taxon>
        <taxon>Oryza</taxon>
        <taxon>Oryza sativa</taxon>
    </lineage>
</organism>
<feature type="chain" id="PRO_0000430128" description="Guanylate kinase 1">
    <location>
        <begin position="1"/>
        <end position="382"/>
    </location>
</feature>
<feature type="domain" description="Guanylate kinase-like" evidence="1">
    <location>
        <begin position="128"/>
        <end position="310"/>
    </location>
</feature>
<feature type="active site" evidence="1">
    <location>
        <position position="168"/>
    </location>
</feature>
<feature type="active site" evidence="1">
    <location>
        <position position="261"/>
    </location>
</feature>
<feature type="active site" evidence="1">
    <location>
        <position position="272"/>
    </location>
</feature>
<feature type="binding site" evidence="1">
    <location>
        <begin position="135"/>
        <end position="142"/>
    </location>
    <ligand>
        <name>ATP</name>
        <dbReference type="ChEBI" id="CHEBI:30616"/>
    </ligand>
</feature>
<feature type="binding site" evidence="1">
    <location>
        <position position="295"/>
    </location>
    <ligand>
        <name>ATP</name>
        <dbReference type="ChEBI" id="CHEBI:30616"/>
    </ligand>
</feature>
<feature type="binding site" evidence="1">
    <location>
        <position position="296"/>
    </location>
    <ligand>
        <name>ATP</name>
        <dbReference type="ChEBI" id="CHEBI:30616"/>
    </ligand>
</feature>
<proteinExistence type="evidence at transcript level"/>